<organism>
    <name type="scientific">Staphylococcus haemolyticus (strain JCSC1435)</name>
    <dbReference type="NCBI Taxonomy" id="279808"/>
    <lineage>
        <taxon>Bacteria</taxon>
        <taxon>Bacillati</taxon>
        <taxon>Bacillota</taxon>
        <taxon>Bacilli</taxon>
        <taxon>Bacillales</taxon>
        <taxon>Staphylococcaceae</taxon>
        <taxon>Staphylococcus</taxon>
    </lineage>
</organism>
<accession>Q4L6Q3</accession>
<dbReference type="EC" id="1.15.1.1" evidence="2"/>
<dbReference type="EMBL" id="AP006716">
    <property type="protein sequence ID" value="BAE04672.1"/>
    <property type="status" value="ALT_INIT"/>
    <property type="molecule type" value="Genomic_DNA"/>
</dbReference>
<dbReference type="RefSeq" id="WP_016931111.1">
    <property type="nucleotide sequence ID" value="NC_007168.1"/>
</dbReference>
<dbReference type="SMR" id="Q4L6Q3"/>
<dbReference type="KEGG" id="sha:SH1363"/>
<dbReference type="eggNOG" id="COG0605">
    <property type="taxonomic scope" value="Bacteria"/>
</dbReference>
<dbReference type="HOGENOM" id="CLU_031625_0_1_9"/>
<dbReference type="OrthoDB" id="9803125at2"/>
<dbReference type="Proteomes" id="UP000000543">
    <property type="component" value="Chromosome"/>
</dbReference>
<dbReference type="GO" id="GO:0005737">
    <property type="term" value="C:cytoplasm"/>
    <property type="evidence" value="ECO:0007669"/>
    <property type="project" value="TreeGrafter"/>
</dbReference>
<dbReference type="GO" id="GO:0046872">
    <property type="term" value="F:metal ion binding"/>
    <property type="evidence" value="ECO:0007669"/>
    <property type="project" value="UniProtKB-KW"/>
</dbReference>
<dbReference type="GO" id="GO:0004784">
    <property type="term" value="F:superoxide dismutase activity"/>
    <property type="evidence" value="ECO:0007669"/>
    <property type="project" value="UniProtKB-EC"/>
</dbReference>
<dbReference type="FunFam" id="1.10.287.990:FF:000001">
    <property type="entry name" value="Superoxide dismutase"/>
    <property type="match status" value="1"/>
</dbReference>
<dbReference type="FunFam" id="3.55.40.20:FF:000001">
    <property type="entry name" value="Superoxide dismutase"/>
    <property type="match status" value="1"/>
</dbReference>
<dbReference type="Gene3D" id="1.10.287.990">
    <property type="entry name" value="Fe,Mn superoxide dismutase (SOD) domain"/>
    <property type="match status" value="1"/>
</dbReference>
<dbReference type="Gene3D" id="3.55.40.20">
    <property type="entry name" value="Iron/manganese superoxide dismutase, C-terminal domain"/>
    <property type="match status" value="1"/>
</dbReference>
<dbReference type="InterPro" id="IPR001189">
    <property type="entry name" value="Mn/Fe_SOD"/>
</dbReference>
<dbReference type="InterPro" id="IPR019833">
    <property type="entry name" value="Mn/Fe_SOD_BS"/>
</dbReference>
<dbReference type="InterPro" id="IPR019832">
    <property type="entry name" value="Mn/Fe_SOD_C"/>
</dbReference>
<dbReference type="InterPro" id="IPR019831">
    <property type="entry name" value="Mn/Fe_SOD_N"/>
</dbReference>
<dbReference type="InterPro" id="IPR036324">
    <property type="entry name" value="Mn/Fe_SOD_N_sf"/>
</dbReference>
<dbReference type="InterPro" id="IPR036314">
    <property type="entry name" value="SOD_C_sf"/>
</dbReference>
<dbReference type="PANTHER" id="PTHR43595">
    <property type="entry name" value="37S RIBOSOMAL PROTEIN S26, MITOCHONDRIAL"/>
    <property type="match status" value="1"/>
</dbReference>
<dbReference type="PANTHER" id="PTHR43595:SF2">
    <property type="entry name" value="SMALL RIBOSOMAL SUBUNIT PROTEIN MS42"/>
    <property type="match status" value="1"/>
</dbReference>
<dbReference type="Pfam" id="PF02777">
    <property type="entry name" value="Sod_Fe_C"/>
    <property type="match status" value="1"/>
</dbReference>
<dbReference type="Pfam" id="PF00081">
    <property type="entry name" value="Sod_Fe_N"/>
    <property type="match status" value="1"/>
</dbReference>
<dbReference type="PIRSF" id="PIRSF000349">
    <property type="entry name" value="SODismutase"/>
    <property type="match status" value="1"/>
</dbReference>
<dbReference type="PRINTS" id="PR01703">
    <property type="entry name" value="MNSODISMTASE"/>
</dbReference>
<dbReference type="SUPFAM" id="SSF54719">
    <property type="entry name" value="Fe,Mn superoxide dismutase (SOD), C-terminal domain"/>
    <property type="match status" value="1"/>
</dbReference>
<dbReference type="SUPFAM" id="SSF46609">
    <property type="entry name" value="Fe,Mn superoxide dismutase (SOD), N-terminal domain"/>
    <property type="match status" value="1"/>
</dbReference>
<dbReference type="PROSITE" id="PS00088">
    <property type="entry name" value="SOD_MN"/>
    <property type="match status" value="1"/>
</dbReference>
<proteinExistence type="inferred from homology"/>
<protein>
    <recommendedName>
        <fullName>Superoxide dismutase [Mn/Fe]</fullName>
        <ecNumber evidence="2">1.15.1.1</ecNumber>
    </recommendedName>
</protein>
<keyword id="KW-0408">Iron</keyword>
<keyword id="KW-0464">Manganese</keyword>
<keyword id="KW-0479">Metal-binding</keyword>
<keyword id="KW-0560">Oxidoreductase</keyword>
<keyword id="KW-0346">Stress response</keyword>
<sequence length="199" mass="22679">MAFELPNLPYATDALEPHIDKQTMEIHHDKHHNTYVTKLNSAVEGTDLESKSIEEIVANLDSVPEDIQTAVRNNGGGHLNHSLFWELLTPNSEEKGTVVDKIKEQWGSLDEFKKEFADKAAARFGSGWAWLVVNNGQLEIVTTPNQDNPLTEGKTPILGLDVWEHAYYLKYQNKRPDYISAFWNVVNWEKVDELYNATK</sequence>
<comment type="function">
    <text evidence="2">Destroys superoxide anion radicals which are normally produced within the cells and which are toxic to biological systems. Catalyzes the dismutation of superoxide anion radicals into O2 and H2O2 by successive reduction and oxidation of the transition metal ion at the active site.</text>
</comment>
<comment type="catalytic activity">
    <reaction evidence="2">
        <text>2 superoxide + 2 H(+) = H2O2 + O2</text>
        <dbReference type="Rhea" id="RHEA:20696"/>
        <dbReference type="ChEBI" id="CHEBI:15378"/>
        <dbReference type="ChEBI" id="CHEBI:15379"/>
        <dbReference type="ChEBI" id="CHEBI:16240"/>
        <dbReference type="ChEBI" id="CHEBI:18421"/>
        <dbReference type="EC" id="1.15.1.1"/>
    </reaction>
    <physiologicalReaction direction="left-to-right" evidence="2">
        <dbReference type="Rhea" id="RHEA:20697"/>
    </physiologicalReaction>
</comment>
<comment type="cofactor">
    <cofactor evidence="2">
        <name>Mn(2+)</name>
        <dbReference type="ChEBI" id="CHEBI:29035"/>
    </cofactor>
    <cofactor evidence="2">
        <name>Fe(3+)</name>
        <dbReference type="ChEBI" id="CHEBI:29034"/>
    </cofactor>
    <text evidence="2">Binds 1 Mn(2+) or Fe(3+) ion per subunit.</text>
</comment>
<comment type="subunit">
    <text evidence="1">Homodimer.</text>
</comment>
<comment type="similarity">
    <text evidence="3">Belongs to the iron/manganese superoxide dismutase family.</text>
</comment>
<comment type="sequence caution" evidence="3">
    <conflict type="erroneous initiation">
        <sequence resource="EMBL-CDS" id="BAE04672"/>
    </conflict>
</comment>
<name>SODM_STAHJ</name>
<feature type="chain" id="PRO_0000293966" description="Superoxide dismutase [Mn/Fe]">
    <location>
        <begin position="1"/>
        <end position="199"/>
    </location>
</feature>
<feature type="binding site" evidence="2">
    <location>
        <position position="27"/>
    </location>
    <ligand>
        <name>Fe(3+)</name>
        <dbReference type="ChEBI" id="CHEBI:29034"/>
    </ligand>
</feature>
<feature type="binding site" evidence="2">
    <location>
        <position position="27"/>
    </location>
    <ligand>
        <name>Mn(2+)</name>
        <dbReference type="ChEBI" id="CHEBI:29035"/>
    </ligand>
</feature>
<feature type="binding site" evidence="2">
    <location>
        <position position="81"/>
    </location>
    <ligand>
        <name>Fe(3+)</name>
        <dbReference type="ChEBI" id="CHEBI:29034"/>
    </ligand>
</feature>
<feature type="binding site" evidence="2">
    <location>
        <position position="81"/>
    </location>
    <ligand>
        <name>Mn(2+)</name>
        <dbReference type="ChEBI" id="CHEBI:29035"/>
    </ligand>
</feature>
<feature type="binding site" evidence="2">
    <location>
        <position position="161"/>
    </location>
    <ligand>
        <name>Fe(3+)</name>
        <dbReference type="ChEBI" id="CHEBI:29034"/>
    </ligand>
</feature>
<feature type="binding site" evidence="2">
    <location>
        <position position="161"/>
    </location>
    <ligand>
        <name>Mn(2+)</name>
        <dbReference type="ChEBI" id="CHEBI:29035"/>
    </ligand>
</feature>
<feature type="binding site" evidence="2">
    <location>
        <position position="165"/>
    </location>
    <ligand>
        <name>Fe(3+)</name>
        <dbReference type="ChEBI" id="CHEBI:29034"/>
    </ligand>
</feature>
<feature type="binding site" evidence="2">
    <location>
        <position position="165"/>
    </location>
    <ligand>
        <name>Mn(2+)</name>
        <dbReference type="ChEBI" id="CHEBI:29035"/>
    </ligand>
</feature>
<gene>
    <name type="primary">sodA</name>
    <name type="ordered locus">SH1363</name>
</gene>
<reference key="1">
    <citation type="journal article" date="2005" name="J. Bacteriol.">
        <title>Whole-genome sequencing of Staphylococcus haemolyticus uncovers the extreme plasticity of its genome and the evolution of human-colonizing staphylococcal species.</title>
        <authorList>
            <person name="Takeuchi F."/>
            <person name="Watanabe S."/>
            <person name="Baba T."/>
            <person name="Yuzawa H."/>
            <person name="Ito T."/>
            <person name="Morimoto Y."/>
            <person name="Kuroda M."/>
            <person name="Cui L."/>
            <person name="Takahashi M."/>
            <person name="Ankai A."/>
            <person name="Baba S."/>
            <person name="Fukui S."/>
            <person name="Lee J.C."/>
            <person name="Hiramatsu K."/>
        </authorList>
    </citation>
    <scope>NUCLEOTIDE SEQUENCE [LARGE SCALE GENOMIC DNA]</scope>
    <source>
        <strain>JCSC1435</strain>
    </source>
</reference>
<evidence type="ECO:0000250" key="1"/>
<evidence type="ECO:0000250" key="2">
    <source>
        <dbReference type="UniProtKB" id="P80293"/>
    </source>
</evidence>
<evidence type="ECO:0000305" key="3"/>